<evidence type="ECO:0000255" key="1">
    <source>
        <dbReference type="HAMAP-Rule" id="MF_01020"/>
    </source>
</evidence>
<accession>B0CJI7</accession>
<feature type="chain" id="PRO_1000084167" description="Phosphoribosyl-ATP pyrophosphatase">
    <location>
        <begin position="1"/>
        <end position="107"/>
    </location>
</feature>
<gene>
    <name evidence="1" type="primary">hisE</name>
    <name type="ordered locus">BSUIS_A1928</name>
</gene>
<proteinExistence type="inferred from homology"/>
<keyword id="KW-0028">Amino-acid biosynthesis</keyword>
<keyword id="KW-0067">ATP-binding</keyword>
<keyword id="KW-0963">Cytoplasm</keyword>
<keyword id="KW-0368">Histidine biosynthesis</keyword>
<keyword id="KW-0378">Hydrolase</keyword>
<keyword id="KW-0547">Nucleotide-binding</keyword>
<dbReference type="EC" id="3.6.1.31" evidence="1"/>
<dbReference type="EMBL" id="CP000911">
    <property type="protein sequence ID" value="ABY38939.1"/>
    <property type="molecule type" value="Genomic_DNA"/>
</dbReference>
<dbReference type="RefSeq" id="WP_002965152.1">
    <property type="nucleotide sequence ID" value="NC_010169.1"/>
</dbReference>
<dbReference type="SMR" id="B0CJI7"/>
<dbReference type="KEGG" id="bmt:BSUIS_A1928"/>
<dbReference type="HOGENOM" id="CLU_123337_1_1_5"/>
<dbReference type="UniPathway" id="UPA00031">
    <property type="reaction ID" value="UER00007"/>
</dbReference>
<dbReference type="Proteomes" id="UP000008545">
    <property type="component" value="Chromosome I"/>
</dbReference>
<dbReference type="GO" id="GO:0005737">
    <property type="term" value="C:cytoplasm"/>
    <property type="evidence" value="ECO:0007669"/>
    <property type="project" value="UniProtKB-SubCell"/>
</dbReference>
<dbReference type="GO" id="GO:0005524">
    <property type="term" value="F:ATP binding"/>
    <property type="evidence" value="ECO:0007669"/>
    <property type="project" value="UniProtKB-KW"/>
</dbReference>
<dbReference type="GO" id="GO:0004636">
    <property type="term" value="F:phosphoribosyl-ATP diphosphatase activity"/>
    <property type="evidence" value="ECO:0007669"/>
    <property type="project" value="UniProtKB-UniRule"/>
</dbReference>
<dbReference type="GO" id="GO:0000105">
    <property type="term" value="P:L-histidine biosynthetic process"/>
    <property type="evidence" value="ECO:0007669"/>
    <property type="project" value="UniProtKB-UniRule"/>
</dbReference>
<dbReference type="CDD" id="cd11534">
    <property type="entry name" value="NTP-PPase_HisIE_like"/>
    <property type="match status" value="1"/>
</dbReference>
<dbReference type="Gene3D" id="1.10.287.1080">
    <property type="entry name" value="MazG-like"/>
    <property type="match status" value="1"/>
</dbReference>
<dbReference type="HAMAP" id="MF_01020">
    <property type="entry name" value="HisE"/>
    <property type="match status" value="1"/>
</dbReference>
<dbReference type="InterPro" id="IPR008179">
    <property type="entry name" value="HisE"/>
</dbReference>
<dbReference type="InterPro" id="IPR021130">
    <property type="entry name" value="PRib-ATP_PPHydrolase-like"/>
</dbReference>
<dbReference type="NCBIfam" id="TIGR03188">
    <property type="entry name" value="histidine_hisI"/>
    <property type="match status" value="1"/>
</dbReference>
<dbReference type="NCBIfam" id="NF001613">
    <property type="entry name" value="PRK00400.1-5"/>
    <property type="match status" value="1"/>
</dbReference>
<dbReference type="PANTHER" id="PTHR42945">
    <property type="entry name" value="HISTIDINE BIOSYNTHESIS BIFUNCTIONAL PROTEIN"/>
    <property type="match status" value="1"/>
</dbReference>
<dbReference type="PANTHER" id="PTHR42945:SF9">
    <property type="entry name" value="HISTIDINE BIOSYNTHESIS BIFUNCTIONAL PROTEIN HISIE"/>
    <property type="match status" value="1"/>
</dbReference>
<dbReference type="Pfam" id="PF01503">
    <property type="entry name" value="PRA-PH"/>
    <property type="match status" value="1"/>
</dbReference>
<dbReference type="SUPFAM" id="SSF101386">
    <property type="entry name" value="all-alpha NTP pyrophosphatases"/>
    <property type="match status" value="1"/>
</dbReference>
<reference key="1">
    <citation type="submission" date="2007-12" db="EMBL/GenBank/DDBJ databases">
        <title>Brucella suis ATCC 23445 whole genome shotgun sequencing project.</title>
        <authorList>
            <person name="Setubal J.C."/>
            <person name="Bowns C."/>
            <person name="Boyle S."/>
            <person name="Crasta O.R."/>
            <person name="Czar M.J."/>
            <person name="Dharmanolla C."/>
            <person name="Gillespie J.J."/>
            <person name="Kenyon R.W."/>
            <person name="Lu J."/>
            <person name="Mane S."/>
            <person name="Mohapatra S."/>
            <person name="Nagrani S."/>
            <person name="Purkayastha A."/>
            <person name="Rajasimha H.K."/>
            <person name="Shallom J.M."/>
            <person name="Shallom S."/>
            <person name="Shukla M."/>
            <person name="Snyder E.E."/>
            <person name="Sobral B.W."/>
            <person name="Wattam A.R."/>
            <person name="Will R."/>
            <person name="Williams K."/>
            <person name="Yoo H."/>
            <person name="Bruce D."/>
            <person name="Detter C."/>
            <person name="Munk C."/>
            <person name="Brettin T.S."/>
        </authorList>
    </citation>
    <scope>NUCLEOTIDE SEQUENCE [LARGE SCALE GENOMIC DNA]</scope>
    <source>
        <strain>ATCC 23445 / NCTC 10510</strain>
    </source>
</reference>
<organism>
    <name type="scientific">Brucella suis (strain ATCC 23445 / NCTC 10510)</name>
    <dbReference type="NCBI Taxonomy" id="470137"/>
    <lineage>
        <taxon>Bacteria</taxon>
        <taxon>Pseudomonadati</taxon>
        <taxon>Pseudomonadota</taxon>
        <taxon>Alphaproteobacteria</taxon>
        <taxon>Hyphomicrobiales</taxon>
        <taxon>Brucellaceae</taxon>
        <taxon>Brucella/Ochrobactrum group</taxon>
        <taxon>Brucella</taxon>
    </lineage>
</organism>
<name>HIS2_BRUSI</name>
<comment type="catalytic activity">
    <reaction evidence="1">
        <text>1-(5-phospho-beta-D-ribosyl)-ATP + H2O = 1-(5-phospho-beta-D-ribosyl)-5'-AMP + diphosphate + H(+)</text>
        <dbReference type="Rhea" id="RHEA:22828"/>
        <dbReference type="ChEBI" id="CHEBI:15377"/>
        <dbReference type="ChEBI" id="CHEBI:15378"/>
        <dbReference type="ChEBI" id="CHEBI:33019"/>
        <dbReference type="ChEBI" id="CHEBI:59457"/>
        <dbReference type="ChEBI" id="CHEBI:73183"/>
        <dbReference type="EC" id="3.6.1.31"/>
    </reaction>
</comment>
<comment type="pathway">
    <text evidence="1">Amino-acid biosynthesis; L-histidine biosynthesis; L-histidine from 5-phospho-alpha-D-ribose 1-diphosphate: step 2/9.</text>
</comment>
<comment type="subcellular location">
    <subcellularLocation>
        <location evidence="1">Cytoplasm</location>
    </subcellularLocation>
</comment>
<comment type="similarity">
    <text evidence="1">Belongs to the PRA-PH family.</text>
</comment>
<sequence>MSQFTLADLERIVAERASVTDGTSYTASLVAKGQPKAAQKLGEEAVETVIAAVSGDRAGVVSESADLLYHLAVVWNIAGVALEDVLQELQRRTAQTGLAEKASRPKG</sequence>
<protein>
    <recommendedName>
        <fullName evidence="1">Phosphoribosyl-ATP pyrophosphatase</fullName>
        <shortName evidence="1">PRA-PH</shortName>
        <ecNumber evidence="1">3.6.1.31</ecNumber>
    </recommendedName>
</protein>